<dbReference type="EC" id="3.5.3.11" evidence="1"/>
<dbReference type="EMBL" id="CP000266">
    <property type="protein sequence ID" value="ABF05058.1"/>
    <property type="molecule type" value="Genomic_DNA"/>
</dbReference>
<dbReference type="RefSeq" id="WP_000105566.1">
    <property type="nucleotide sequence ID" value="NC_008258.1"/>
</dbReference>
<dbReference type="SMR" id="Q0T0V7"/>
<dbReference type="GeneID" id="89517749"/>
<dbReference type="KEGG" id="sfv:SFV_2989"/>
<dbReference type="HOGENOM" id="CLU_039478_0_0_6"/>
<dbReference type="UniPathway" id="UPA00534">
    <property type="reaction ID" value="UER00287"/>
</dbReference>
<dbReference type="Proteomes" id="UP000000659">
    <property type="component" value="Chromosome"/>
</dbReference>
<dbReference type="GO" id="GO:0008783">
    <property type="term" value="F:agmatinase activity"/>
    <property type="evidence" value="ECO:0007669"/>
    <property type="project" value="UniProtKB-UniRule"/>
</dbReference>
<dbReference type="GO" id="GO:0030145">
    <property type="term" value="F:manganese ion binding"/>
    <property type="evidence" value="ECO:0007669"/>
    <property type="project" value="InterPro"/>
</dbReference>
<dbReference type="GO" id="GO:0033389">
    <property type="term" value="P:putrescine biosynthetic process from arginine, via agmatine"/>
    <property type="evidence" value="ECO:0007669"/>
    <property type="project" value="TreeGrafter"/>
</dbReference>
<dbReference type="GO" id="GO:0008295">
    <property type="term" value="P:spermidine biosynthetic process"/>
    <property type="evidence" value="ECO:0007669"/>
    <property type="project" value="UniProtKB-UniRule"/>
</dbReference>
<dbReference type="CDD" id="cd11592">
    <property type="entry name" value="Agmatinase_PAH"/>
    <property type="match status" value="1"/>
</dbReference>
<dbReference type="FunFam" id="3.40.800.10:FF:000001">
    <property type="entry name" value="Agmatinase"/>
    <property type="match status" value="1"/>
</dbReference>
<dbReference type="Gene3D" id="3.40.800.10">
    <property type="entry name" value="Ureohydrolase domain"/>
    <property type="match status" value="1"/>
</dbReference>
<dbReference type="HAMAP" id="MF_01418">
    <property type="entry name" value="SpeB"/>
    <property type="match status" value="1"/>
</dbReference>
<dbReference type="InterPro" id="IPR023694">
    <property type="entry name" value="Agmatinase"/>
</dbReference>
<dbReference type="InterPro" id="IPR005925">
    <property type="entry name" value="Agmatinase-rel"/>
</dbReference>
<dbReference type="InterPro" id="IPR006035">
    <property type="entry name" value="Ureohydrolase"/>
</dbReference>
<dbReference type="InterPro" id="IPR023696">
    <property type="entry name" value="Ureohydrolase_dom_sf"/>
</dbReference>
<dbReference type="InterPro" id="IPR020855">
    <property type="entry name" value="Ureohydrolase_Mn_BS"/>
</dbReference>
<dbReference type="NCBIfam" id="TIGR01230">
    <property type="entry name" value="agmatinase"/>
    <property type="match status" value="1"/>
</dbReference>
<dbReference type="NCBIfam" id="NF002564">
    <property type="entry name" value="PRK02190.1"/>
    <property type="match status" value="1"/>
</dbReference>
<dbReference type="PANTHER" id="PTHR11358">
    <property type="entry name" value="ARGINASE/AGMATINASE"/>
    <property type="match status" value="1"/>
</dbReference>
<dbReference type="PANTHER" id="PTHR11358:SF26">
    <property type="entry name" value="GUANIDINO ACID HYDROLASE, MITOCHONDRIAL"/>
    <property type="match status" value="1"/>
</dbReference>
<dbReference type="Pfam" id="PF00491">
    <property type="entry name" value="Arginase"/>
    <property type="match status" value="1"/>
</dbReference>
<dbReference type="PIRSF" id="PIRSF036979">
    <property type="entry name" value="Arginase"/>
    <property type="match status" value="1"/>
</dbReference>
<dbReference type="SUPFAM" id="SSF52768">
    <property type="entry name" value="Arginase/deacetylase"/>
    <property type="match status" value="1"/>
</dbReference>
<dbReference type="PROSITE" id="PS01053">
    <property type="entry name" value="ARGINASE_1"/>
    <property type="match status" value="1"/>
</dbReference>
<dbReference type="PROSITE" id="PS51409">
    <property type="entry name" value="ARGINASE_2"/>
    <property type="match status" value="1"/>
</dbReference>
<protein>
    <recommendedName>
        <fullName evidence="1">Agmatinase</fullName>
        <ecNumber evidence="1">3.5.3.11</ecNumber>
    </recommendedName>
    <alternativeName>
        <fullName evidence="1">Agmatine ureohydrolase</fullName>
        <shortName evidence="1">AUH</shortName>
    </alternativeName>
</protein>
<sequence length="306" mass="33557">MSTLGHQYDNSLVSNAFGFLRLPMNFQPYDSDADWVITGVPFDMATSGRAGGRHGPAAIRQVSTNLAWEHNRFPWNFDMRERLNVVDCGDLVYAFGDAREMSEKLQAHAEKLLAAGKRMLSFGGDHFVTLPLLRAHAKHFGKMALVHFDAHTDTYANGCEFDHGTMFYTAPKEGLIDPNHSVQIGIRTEFDKDNGFTVLDACQVNDRSVDDVIAQVKQIVGDMPVYLTFDIDCLDPAFAPGTGTPVIGGLTSDRAIKLVRGLKDLNIVGMDVVEVAPAYDQSEITALAAATLALEMLYIQAAKKGE</sequence>
<keyword id="KW-0378">Hydrolase</keyword>
<keyword id="KW-0464">Manganese</keyword>
<keyword id="KW-0479">Metal-binding</keyword>
<keyword id="KW-0620">Polyamine biosynthesis</keyword>
<keyword id="KW-0661">Putrescine biosynthesis</keyword>
<keyword id="KW-0745">Spermidine biosynthesis</keyword>
<gene>
    <name evidence="1" type="primary">speB</name>
    <name type="ordered locus">SFV_2989</name>
</gene>
<proteinExistence type="inferred from homology"/>
<accession>Q0T0V7</accession>
<reference key="1">
    <citation type="journal article" date="2006" name="BMC Genomics">
        <title>Complete genome sequence of Shigella flexneri 5b and comparison with Shigella flexneri 2a.</title>
        <authorList>
            <person name="Nie H."/>
            <person name="Yang F."/>
            <person name="Zhang X."/>
            <person name="Yang J."/>
            <person name="Chen L."/>
            <person name="Wang J."/>
            <person name="Xiong Z."/>
            <person name="Peng J."/>
            <person name="Sun L."/>
            <person name="Dong J."/>
            <person name="Xue Y."/>
            <person name="Xu X."/>
            <person name="Chen S."/>
            <person name="Yao Z."/>
            <person name="Shen Y."/>
            <person name="Jin Q."/>
        </authorList>
    </citation>
    <scope>NUCLEOTIDE SEQUENCE [LARGE SCALE GENOMIC DNA]</scope>
    <source>
        <strain>8401</strain>
    </source>
</reference>
<comment type="function">
    <text evidence="1">Catalyzes the formation of putrescine from agmatine.</text>
</comment>
<comment type="catalytic activity">
    <reaction evidence="1">
        <text>agmatine + H2O = urea + putrescine</text>
        <dbReference type="Rhea" id="RHEA:13929"/>
        <dbReference type="ChEBI" id="CHEBI:15377"/>
        <dbReference type="ChEBI" id="CHEBI:16199"/>
        <dbReference type="ChEBI" id="CHEBI:58145"/>
        <dbReference type="ChEBI" id="CHEBI:326268"/>
        <dbReference type="EC" id="3.5.3.11"/>
    </reaction>
</comment>
<comment type="cofactor">
    <cofactor evidence="1">
        <name>Mn(2+)</name>
        <dbReference type="ChEBI" id="CHEBI:29035"/>
    </cofactor>
</comment>
<comment type="pathway">
    <text evidence="1">Amine and polyamine biosynthesis; putrescine biosynthesis via agmatine pathway; putrescine from agmatine: step 1/1.</text>
</comment>
<comment type="similarity">
    <text evidence="1">Belongs to the arginase family. Agmatinase subfamily.</text>
</comment>
<organism>
    <name type="scientific">Shigella flexneri serotype 5b (strain 8401)</name>
    <dbReference type="NCBI Taxonomy" id="373384"/>
    <lineage>
        <taxon>Bacteria</taxon>
        <taxon>Pseudomonadati</taxon>
        <taxon>Pseudomonadota</taxon>
        <taxon>Gammaproteobacteria</taxon>
        <taxon>Enterobacterales</taxon>
        <taxon>Enterobacteriaceae</taxon>
        <taxon>Shigella</taxon>
    </lineage>
</organism>
<name>SPEB_SHIF8</name>
<evidence type="ECO:0000255" key="1">
    <source>
        <dbReference type="HAMAP-Rule" id="MF_01418"/>
    </source>
</evidence>
<feature type="chain" id="PRO_1000024286" description="Agmatinase">
    <location>
        <begin position="1"/>
        <end position="306"/>
    </location>
</feature>
<feature type="binding site" evidence="1">
    <location>
        <position position="126"/>
    </location>
    <ligand>
        <name>Mn(2+)</name>
        <dbReference type="ChEBI" id="CHEBI:29035"/>
    </ligand>
</feature>
<feature type="binding site" evidence="1">
    <location>
        <position position="149"/>
    </location>
    <ligand>
        <name>Mn(2+)</name>
        <dbReference type="ChEBI" id="CHEBI:29035"/>
    </ligand>
</feature>
<feature type="binding site" evidence="1">
    <location>
        <position position="151"/>
    </location>
    <ligand>
        <name>Mn(2+)</name>
        <dbReference type="ChEBI" id="CHEBI:29035"/>
    </ligand>
</feature>
<feature type="binding site" evidence="1">
    <location>
        <position position="153"/>
    </location>
    <ligand>
        <name>Mn(2+)</name>
        <dbReference type="ChEBI" id="CHEBI:29035"/>
    </ligand>
</feature>
<feature type="binding site" evidence="1">
    <location>
        <position position="230"/>
    </location>
    <ligand>
        <name>Mn(2+)</name>
        <dbReference type="ChEBI" id="CHEBI:29035"/>
    </ligand>
</feature>
<feature type="binding site" evidence="1">
    <location>
        <position position="232"/>
    </location>
    <ligand>
        <name>Mn(2+)</name>
        <dbReference type="ChEBI" id="CHEBI:29035"/>
    </ligand>
</feature>